<dbReference type="EMBL" id="AF002109">
    <property type="protein sequence ID" value="AAB95286.1"/>
    <property type="molecule type" value="Genomic_DNA"/>
</dbReference>
<dbReference type="EMBL" id="CP002685">
    <property type="protein sequence ID" value="AEC09763.1"/>
    <property type="molecule type" value="Genomic_DNA"/>
</dbReference>
<dbReference type="EMBL" id="BT001919">
    <property type="protein sequence ID" value="AAN71918.1"/>
    <property type="molecule type" value="mRNA"/>
</dbReference>
<dbReference type="PIR" id="B84824">
    <property type="entry name" value="B84824"/>
</dbReference>
<dbReference type="RefSeq" id="NP_181530.1">
    <property type="nucleotide sequence ID" value="NM_129559.3"/>
</dbReference>
<dbReference type="SMR" id="O04204"/>
<dbReference type="BioGRID" id="3927">
    <property type="interactions" value="129"/>
</dbReference>
<dbReference type="FunCoup" id="O04204">
    <property type="interactions" value="3179"/>
</dbReference>
<dbReference type="IntAct" id="O04204">
    <property type="interactions" value="2"/>
</dbReference>
<dbReference type="STRING" id="3702.O04204"/>
<dbReference type="PaxDb" id="3702-AT2G40010.1"/>
<dbReference type="ProteomicsDB" id="228177"/>
<dbReference type="EnsemblPlants" id="AT2G40010.1">
    <property type="protein sequence ID" value="AT2G40010.1"/>
    <property type="gene ID" value="AT2G40010"/>
</dbReference>
<dbReference type="GeneID" id="818589"/>
<dbReference type="Gramene" id="AT2G40010.1">
    <property type="protein sequence ID" value="AT2G40010.1"/>
    <property type="gene ID" value="AT2G40010"/>
</dbReference>
<dbReference type="KEGG" id="ath:AT2G40010"/>
<dbReference type="Araport" id="AT2G40010"/>
<dbReference type="TAIR" id="AT2G40010"/>
<dbReference type="eggNOG" id="KOG0815">
    <property type="taxonomic scope" value="Eukaryota"/>
</dbReference>
<dbReference type="HOGENOM" id="CLU_053173_1_1_1"/>
<dbReference type="InParanoid" id="O04204"/>
<dbReference type="OMA" id="ESHEYYE"/>
<dbReference type="PhylomeDB" id="O04204"/>
<dbReference type="PRO" id="PR:O04204"/>
<dbReference type="Proteomes" id="UP000006548">
    <property type="component" value="Chromosome 2"/>
</dbReference>
<dbReference type="ExpressionAtlas" id="O04204">
    <property type="expression patterns" value="baseline and differential"/>
</dbReference>
<dbReference type="GO" id="GO:0022626">
    <property type="term" value="C:cytosolic ribosome"/>
    <property type="evidence" value="ECO:0007005"/>
    <property type="project" value="TAIR"/>
</dbReference>
<dbReference type="GO" id="GO:0005794">
    <property type="term" value="C:Golgi apparatus"/>
    <property type="evidence" value="ECO:0007005"/>
    <property type="project" value="TAIR"/>
</dbReference>
<dbReference type="GO" id="GO:1990904">
    <property type="term" value="C:ribonucleoprotein complex"/>
    <property type="evidence" value="ECO:0007669"/>
    <property type="project" value="UniProtKB-KW"/>
</dbReference>
<dbReference type="GO" id="GO:0003729">
    <property type="term" value="F:mRNA binding"/>
    <property type="evidence" value="ECO:0000314"/>
    <property type="project" value="TAIR"/>
</dbReference>
<dbReference type="GO" id="GO:0003735">
    <property type="term" value="F:structural constituent of ribosome"/>
    <property type="evidence" value="ECO:0000314"/>
    <property type="project" value="CAFA"/>
</dbReference>
<dbReference type="GO" id="GO:0042254">
    <property type="term" value="P:ribosome biogenesis"/>
    <property type="evidence" value="ECO:0007669"/>
    <property type="project" value="InterPro"/>
</dbReference>
<dbReference type="CDD" id="cd05795">
    <property type="entry name" value="Ribosomal_P0_L10e"/>
    <property type="match status" value="1"/>
</dbReference>
<dbReference type="FunFam" id="3.90.105.20:FF:000001">
    <property type="entry name" value="60S acidic ribosomal protein P0"/>
    <property type="match status" value="1"/>
</dbReference>
<dbReference type="Gene3D" id="3.30.70.1730">
    <property type="match status" value="1"/>
</dbReference>
<dbReference type="Gene3D" id="3.90.105.20">
    <property type="match status" value="1"/>
</dbReference>
<dbReference type="InterPro" id="IPR050323">
    <property type="entry name" value="Ribosomal_protein_uL10"/>
</dbReference>
<dbReference type="InterPro" id="IPR001790">
    <property type="entry name" value="Ribosomal_uL10"/>
</dbReference>
<dbReference type="InterPro" id="IPR040637">
    <property type="entry name" value="Ribosomal_uL10-like_insert"/>
</dbReference>
<dbReference type="InterPro" id="IPR043164">
    <property type="entry name" value="Ribosomal_uL10-like_insert_sf"/>
</dbReference>
<dbReference type="InterPro" id="IPR043141">
    <property type="entry name" value="Ribosomal_uL10-like_sf"/>
</dbReference>
<dbReference type="InterPro" id="IPR030670">
    <property type="entry name" value="uL10_eukaryotes"/>
</dbReference>
<dbReference type="PANTHER" id="PTHR45699">
    <property type="entry name" value="60S ACIDIC RIBOSOMAL PROTEIN P0"/>
    <property type="match status" value="1"/>
</dbReference>
<dbReference type="PANTHER" id="PTHR45699:SF3">
    <property type="entry name" value="LARGE RIBOSOMAL SUBUNIT PROTEIN UL10"/>
    <property type="match status" value="1"/>
</dbReference>
<dbReference type="Pfam" id="PF00428">
    <property type="entry name" value="Ribosomal_60s"/>
    <property type="match status" value="1"/>
</dbReference>
<dbReference type="Pfam" id="PF00466">
    <property type="entry name" value="Ribosomal_L10"/>
    <property type="match status" value="1"/>
</dbReference>
<dbReference type="Pfam" id="PF17777">
    <property type="entry name" value="RL10P_insert"/>
    <property type="match status" value="1"/>
</dbReference>
<dbReference type="PIRSF" id="PIRSF039087">
    <property type="entry name" value="L10E"/>
    <property type="match status" value="1"/>
</dbReference>
<dbReference type="SUPFAM" id="SSF160369">
    <property type="entry name" value="Ribosomal protein L10-like"/>
    <property type="match status" value="1"/>
</dbReference>
<proteinExistence type="evidence at protein level"/>
<accession>O04204</accession>
<comment type="function">
    <text>Ribosomal protein P0 is the functional equivalent of E.coli protein L10.</text>
</comment>
<comment type="subunit">
    <text evidence="1">P0 forms a pentameric complex by interaction with dimers of P1 and P2.</text>
</comment>
<comment type="interaction">
    <interactant intactId="EBI-4454995">
        <id>O04204</id>
    </interactant>
    <interactant intactId="EBI-4454990">
        <id>Q8LEQ0</id>
        <label>RPP1C</label>
    </interactant>
    <organismsDiffer>false</organismsDiffer>
    <experiments>2</experiments>
</comment>
<comment type="PTM">
    <text evidence="1">Phosphorylated.</text>
</comment>
<comment type="similarity">
    <text evidence="3">Belongs to the universal ribosomal protein uL10 family.</text>
</comment>
<sequence length="317" mass="33667">MAVKATKAEKKIVYDSKLCQLLNEYSQILVVAADNVGSTQLQNIRKGLRGDSVVLMGKNTMMKRSVRIHADKTGNQAFLSLLPLLQGNVGLIFTKGDLKEVSEEVAKYKVGAPARVGLVAPIDVVVQPGNTGLDPSQTSFFQVLNIPTKINKGTVEIITPVELIKKGDKVGSSEAALLAKLGIRPFSYGLVVESVYDNGSVFNPEVLNLTEDDLVEKFAAGVSMITALSLAISYPTVAAAPHMFLNAYKNVLAVALATEYSFPQAENVKEFLKDPTKFAVAVAAPVSGESGGAVVAVAVEEEAAEESDGDMGFDLFG</sequence>
<gene>
    <name type="primary">RPP0A</name>
    <name type="ordered locus">At2g40010</name>
    <name type="ORF">T28M21.17</name>
</gene>
<reference key="1">
    <citation type="journal article" date="1999" name="Nature">
        <title>Sequence and analysis of chromosome 2 of the plant Arabidopsis thaliana.</title>
        <authorList>
            <person name="Lin X."/>
            <person name="Kaul S."/>
            <person name="Rounsley S.D."/>
            <person name="Shea T.P."/>
            <person name="Benito M.-I."/>
            <person name="Town C.D."/>
            <person name="Fujii C.Y."/>
            <person name="Mason T.M."/>
            <person name="Bowman C.L."/>
            <person name="Barnstead M.E."/>
            <person name="Feldblyum T.V."/>
            <person name="Buell C.R."/>
            <person name="Ketchum K.A."/>
            <person name="Lee J.J."/>
            <person name="Ronning C.M."/>
            <person name="Koo H.L."/>
            <person name="Moffat K.S."/>
            <person name="Cronin L.A."/>
            <person name="Shen M."/>
            <person name="Pai G."/>
            <person name="Van Aken S."/>
            <person name="Umayam L."/>
            <person name="Tallon L.J."/>
            <person name="Gill J.E."/>
            <person name="Adams M.D."/>
            <person name="Carrera A.J."/>
            <person name="Creasy T.H."/>
            <person name="Goodman H.M."/>
            <person name="Somerville C.R."/>
            <person name="Copenhaver G.P."/>
            <person name="Preuss D."/>
            <person name="Nierman W.C."/>
            <person name="White O."/>
            <person name="Eisen J.A."/>
            <person name="Salzberg S.L."/>
            <person name="Fraser C.M."/>
            <person name="Venter J.C."/>
        </authorList>
    </citation>
    <scope>NUCLEOTIDE SEQUENCE [LARGE SCALE GENOMIC DNA]</scope>
    <source>
        <strain>cv. Columbia</strain>
    </source>
</reference>
<reference key="2">
    <citation type="journal article" date="2017" name="Plant J.">
        <title>Araport11: a complete reannotation of the Arabidopsis thaliana reference genome.</title>
        <authorList>
            <person name="Cheng C.Y."/>
            <person name="Krishnakumar V."/>
            <person name="Chan A.P."/>
            <person name="Thibaud-Nissen F."/>
            <person name="Schobel S."/>
            <person name="Town C.D."/>
        </authorList>
    </citation>
    <scope>GENOME REANNOTATION</scope>
    <source>
        <strain>cv. Columbia</strain>
    </source>
</reference>
<reference key="3">
    <citation type="journal article" date="2003" name="Science">
        <title>Empirical analysis of transcriptional activity in the Arabidopsis genome.</title>
        <authorList>
            <person name="Yamada K."/>
            <person name="Lim J."/>
            <person name="Dale J.M."/>
            <person name="Chen H."/>
            <person name="Shinn P."/>
            <person name="Palm C.J."/>
            <person name="Southwick A.M."/>
            <person name="Wu H.C."/>
            <person name="Kim C.J."/>
            <person name="Nguyen M."/>
            <person name="Pham P.K."/>
            <person name="Cheuk R.F."/>
            <person name="Karlin-Newmann G."/>
            <person name="Liu S.X."/>
            <person name="Lam B."/>
            <person name="Sakano H."/>
            <person name="Wu T."/>
            <person name="Yu G."/>
            <person name="Miranda M."/>
            <person name="Quach H.L."/>
            <person name="Tripp M."/>
            <person name="Chang C.H."/>
            <person name="Lee J.M."/>
            <person name="Toriumi M.J."/>
            <person name="Chan M.M."/>
            <person name="Tang C.C."/>
            <person name="Onodera C.S."/>
            <person name="Deng J.M."/>
            <person name="Akiyama K."/>
            <person name="Ansari Y."/>
            <person name="Arakawa T."/>
            <person name="Banh J."/>
            <person name="Banno F."/>
            <person name="Bowser L."/>
            <person name="Brooks S.Y."/>
            <person name="Carninci P."/>
            <person name="Chao Q."/>
            <person name="Choy N."/>
            <person name="Enju A."/>
            <person name="Goldsmith A.D."/>
            <person name="Gurjal M."/>
            <person name="Hansen N.F."/>
            <person name="Hayashizaki Y."/>
            <person name="Johnson-Hopson C."/>
            <person name="Hsuan V.W."/>
            <person name="Iida K."/>
            <person name="Karnes M."/>
            <person name="Khan S."/>
            <person name="Koesema E."/>
            <person name="Ishida J."/>
            <person name="Jiang P.X."/>
            <person name="Jones T."/>
            <person name="Kawai J."/>
            <person name="Kamiya A."/>
            <person name="Meyers C."/>
            <person name="Nakajima M."/>
            <person name="Narusaka M."/>
            <person name="Seki M."/>
            <person name="Sakurai T."/>
            <person name="Satou M."/>
            <person name="Tamse R."/>
            <person name="Vaysberg M."/>
            <person name="Wallender E.K."/>
            <person name="Wong C."/>
            <person name="Yamamura Y."/>
            <person name="Yuan S."/>
            <person name="Shinozaki K."/>
            <person name="Davis R.W."/>
            <person name="Theologis A."/>
            <person name="Ecker J.R."/>
        </authorList>
    </citation>
    <scope>NUCLEOTIDE SEQUENCE [LARGE SCALE MRNA]</scope>
    <source>
        <strain>cv. Columbia</strain>
    </source>
</reference>
<reference key="4">
    <citation type="journal article" date="2001" name="Plant Physiol.">
        <title>The organization of cytoplasmic ribosomal protein genes in the Arabidopsis genome.</title>
        <authorList>
            <person name="Barakat A."/>
            <person name="Szick-Miranda K."/>
            <person name="Chang I.-F."/>
            <person name="Guyot R."/>
            <person name="Blanc G."/>
            <person name="Cooke R."/>
            <person name="Delseny M."/>
            <person name="Bailey-Serres J."/>
        </authorList>
    </citation>
    <scope>GENE FAMILY ORGANIZATION</scope>
    <scope>NOMENCLATURE</scope>
</reference>
<reference key="5">
    <citation type="journal article" date="2023" name="Plant Cell">
        <title>An updated nomenclature for plant ribosomal protein genes.</title>
        <authorList>
            <person name="Scarpin M.R."/>
            <person name="Busche M."/>
            <person name="Martinez R.E."/>
            <person name="Harper L.C."/>
            <person name="Reiser L."/>
            <person name="Szakonyi D."/>
            <person name="Merchante C."/>
            <person name="Lan T."/>
            <person name="Xiong W."/>
            <person name="Mo B."/>
            <person name="Tang G."/>
            <person name="Chen X."/>
            <person name="Bailey-Serres J."/>
            <person name="Browning K.S."/>
            <person name="Brunkard J.O."/>
        </authorList>
    </citation>
    <scope>NOMENCLATURE</scope>
</reference>
<evidence type="ECO:0000250" key="1"/>
<evidence type="ECO:0000303" key="2">
    <source>
    </source>
</evidence>
<evidence type="ECO:0000305" key="3"/>
<keyword id="KW-0597">Phosphoprotein</keyword>
<keyword id="KW-1185">Reference proteome</keyword>
<keyword id="KW-0687">Ribonucleoprotein</keyword>
<keyword id="KW-0689">Ribosomal protein</keyword>
<organism>
    <name type="scientific">Arabidopsis thaliana</name>
    <name type="common">Mouse-ear cress</name>
    <dbReference type="NCBI Taxonomy" id="3702"/>
    <lineage>
        <taxon>Eukaryota</taxon>
        <taxon>Viridiplantae</taxon>
        <taxon>Streptophyta</taxon>
        <taxon>Embryophyta</taxon>
        <taxon>Tracheophyta</taxon>
        <taxon>Spermatophyta</taxon>
        <taxon>Magnoliopsida</taxon>
        <taxon>eudicotyledons</taxon>
        <taxon>Gunneridae</taxon>
        <taxon>Pentapetalae</taxon>
        <taxon>rosids</taxon>
        <taxon>malvids</taxon>
        <taxon>Brassicales</taxon>
        <taxon>Brassicaceae</taxon>
        <taxon>Camelineae</taxon>
        <taxon>Arabidopsis</taxon>
    </lineage>
</organism>
<name>RLA01_ARATH</name>
<protein>
    <recommendedName>
        <fullName evidence="2">Large ribosomal subunit protein uL10z</fullName>
    </recommendedName>
    <alternativeName>
        <fullName>60S acidic ribosomal protein P0-1</fullName>
    </alternativeName>
</protein>
<feature type="chain" id="PRO_0000154775" description="Large ribosomal subunit protein uL10z">
    <location>
        <begin position="1"/>
        <end position="317"/>
    </location>
</feature>